<accession>Q323C6</accession>
<name>GATY_SHIBS</name>
<gene>
    <name evidence="1" type="primary">gatY</name>
    <name type="ordered locus">SBO_0917</name>
</gene>
<evidence type="ECO:0000255" key="1">
    <source>
        <dbReference type="HAMAP-Rule" id="MF_01294"/>
    </source>
</evidence>
<evidence type="ECO:0000305" key="2"/>
<organism>
    <name type="scientific">Shigella boydii serotype 4 (strain Sb227)</name>
    <dbReference type="NCBI Taxonomy" id="300268"/>
    <lineage>
        <taxon>Bacteria</taxon>
        <taxon>Pseudomonadati</taxon>
        <taxon>Pseudomonadota</taxon>
        <taxon>Gammaproteobacteria</taxon>
        <taxon>Enterobacterales</taxon>
        <taxon>Enterobacteriaceae</taxon>
        <taxon>Shigella</taxon>
    </lineage>
</organism>
<sequence length="284" mass="30834">MHVVSTKQMLNNAQRGGYAVPAFNIHNLETMQVVVETAANLHAPVIIAGTPGTFTHAGTENLLALVSAMAKQYHHPLAIHLDHHTKFDDIAQKVRSGVRSVMIDASHLPFAQNISRVKEVVDFCHRFDVSVEAELGQLGGQEDDVQVNEADAFYTNPAQAREFAEATGIDSLAVAIGTAHGMYASAPALDFSRLENIRQWVNLPLVLHGASGLSTKDIQQTIKLGICKINVATELKNAFSQALKNYLTEHPEATEPRDYLQSAKSAMRDVVSKVIADCGCEGRA</sequence>
<protein>
    <recommendedName>
        <fullName evidence="1">D-tagatose-1,6-bisphosphate aldolase subunit GatY</fullName>
        <shortName evidence="1">TBPA</shortName>
        <shortName evidence="1">TagBP aldolase</shortName>
        <ecNumber evidence="1">4.1.2.40</ecNumber>
    </recommendedName>
    <alternativeName>
        <fullName evidence="1">D-tagatose-bisphosphate aldolase class II</fullName>
    </alternativeName>
    <alternativeName>
        <fullName evidence="1">Tagatose-bisphosphate aldolase</fullName>
    </alternativeName>
</protein>
<dbReference type="EC" id="4.1.2.40" evidence="1"/>
<dbReference type="EMBL" id="CP000036">
    <property type="protein sequence ID" value="ABB65582.1"/>
    <property type="status" value="ALT_INIT"/>
    <property type="molecule type" value="Genomic_DNA"/>
</dbReference>
<dbReference type="RefSeq" id="WP_000558570.1">
    <property type="nucleotide sequence ID" value="NC_007613.1"/>
</dbReference>
<dbReference type="SMR" id="Q323C6"/>
<dbReference type="KEGG" id="sbo:SBO_0917"/>
<dbReference type="HOGENOM" id="CLU_040088_0_1_6"/>
<dbReference type="UniPathway" id="UPA00704">
    <property type="reaction ID" value="UER00716"/>
</dbReference>
<dbReference type="Proteomes" id="UP000007067">
    <property type="component" value="Chromosome"/>
</dbReference>
<dbReference type="GO" id="GO:0005829">
    <property type="term" value="C:cytosol"/>
    <property type="evidence" value="ECO:0007669"/>
    <property type="project" value="TreeGrafter"/>
</dbReference>
<dbReference type="GO" id="GO:0009025">
    <property type="term" value="F:tagatose-bisphosphate aldolase activity"/>
    <property type="evidence" value="ECO:0007669"/>
    <property type="project" value="UniProtKB-UniRule"/>
</dbReference>
<dbReference type="GO" id="GO:0008270">
    <property type="term" value="F:zinc ion binding"/>
    <property type="evidence" value="ECO:0007669"/>
    <property type="project" value="UniProtKB-UniRule"/>
</dbReference>
<dbReference type="GO" id="GO:2001059">
    <property type="term" value="P:D-tagatose 6-phosphate catabolic process"/>
    <property type="evidence" value="ECO:0007669"/>
    <property type="project" value="UniProtKB-UniRule"/>
</dbReference>
<dbReference type="GO" id="GO:0019404">
    <property type="term" value="P:galactitol catabolic process"/>
    <property type="evidence" value="ECO:0007669"/>
    <property type="project" value="InterPro"/>
</dbReference>
<dbReference type="CDD" id="cd00947">
    <property type="entry name" value="TBP_aldolase_IIB"/>
    <property type="match status" value="1"/>
</dbReference>
<dbReference type="FunFam" id="3.20.20.70:FF:000043">
    <property type="entry name" value="D-tagatose-1,6-bisphosphate aldolase subunit GatY"/>
    <property type="match status" value="1"/>
</dbReference>
<dbReference type="Gene3D" id="3.20.20.70">
    <property type="entry name" value="Aldolase class I"/>
    <property type="match status" value="1"/>
</dbReference>
<dbReference type="HAMAP" id="MF_01294">
    <property type="entry name" value="TagBP_aldolase_GatY"/>
    <property type="match status" value="1"/>
</dbReference>
<dbReference type="InterPro" id="IPR013785">
    <property type="entry name" value="Aldolase_TIM"/>
</dbReference>
<dbReference type="InterPro" id="IPR050246">
    <property type="entry name" value="Class_II_FBP_aldolase"/>
</dbReference>
<dbReference type="InterPro" id="IPR000771">
    <property type="entry name" value="FBA_II"/>
</dbReference>
<dbReference type="InterPro" id="IPR011288">
    <property type="entry name" value="TagBP_ald_KbaY/GatY"/>
</dbReference>
<dbReference type="InterPro" id="IPR023955">
    <property type="entry name" value="TagBP_aldolase_GatY"/>
</dbReference>
<dbReference type="NCBIfam" id="TIGR00167">
    <property type="entry name" value="cbbA"/>
    <property type="match status" value="1"/>
</dbReference>
<dbReference type="NCBIfam" id="NF006626">
    <property type="entry name" value="PRK09195.1"/>
    <property type="match status" value="1"/>
</dbReference>
<dbReference type="NCBIfam" id="NF009374">
    <property type="entry name" value="PRK12737.1"/>
    <property type="match status" value="1"/>
</dbReference>
<dbReference type="NCBIfam" id="TIGR01858">
    <property type="entry name" value="tag_bisphos_ald"/>
    <property type="match status" value="1"/>
</dbReference>
<dbReference type="PANTHER" id="PTHR30304">
    <property type="entry name" value="D-TAGATOSE-1,6-BISPHOSPHATE ALDOLASE"/>
    <property type="match status" value="1"/>
</dbReference>
<dbReference type="PANTHER" id="PTHR30304:SF0">
    <property type="entry name" value="D-TAGATOSE-1,6-BISPHOSPHATE ALDOLASE SUBUNIT GATY-RELATED"/>
    <property type="match status" value="1"/>
</dbReference>
<dbReference type="Pfam" id="PF01116">
    <property type="entry name" value="F_bP_aldolase"/>
    <property type="match status" value="1"/>
</dbReference>
<dbReference type="PIRSF" id="PIRSF001359">
    <property type="entry name" value="F_bP_aldolase_II"/>
    <property type="match status" value="1"/>
</dbReference>
<dbReference type="SUPFAM" id="SSF51569">
    <property type="entry name" value="Aldolase"/>
    <property type="match status" value="1"/>
</dbReference>
<dbReference type="PROSITE" id="PS00602">
    <property type="entry name" value="ALDOLASE_CLASS_II_1"/>
    <property type="match status" value="1"/>
</dbReference>
<dbReference type="PROSITE" id="PS00806">
    <property type="entry name" value="ALDOLASE_CLASS_II_2"/>
    <property type="match status" value="1"/>
</dbReference>
<feature type="chain" id="PRO_0000355353" description="D-tagatose-1,6-bisphosphate aldolase subunit GatY">
    <location>
        <begin position="1"/>
        <end position="284"/>
    </location>
</feature>
<feature type="active site" description="Proton donor" evidence="1">
    <location>
        <position position="82"/>
    </location>
</feature>
<feature type="binding site" evidence="1">
    <location>
        <position position="83"/>
    </location>
    <ligand>
        <name>Zn(2+)</name>
        <dbReference type="ChEBI" id="CHEBI:29105"/>
        <note>catalytic</note>
    </ligand>
</feature>
<feature type="binding site" evidence="1">
    <location>
        <position position="180"/>
    </location>
    <ligand>
        <name>Zn(2+)</name>
        <dbReference type="ChEBI" id="CHEBI:29105"/>
        <note>catalytic</note>
    </ligand>
</feature>
<feature type="binding site" evidence="1">
    <location>
        <position position="181"/>
    </location>
    <ligand>
        <name>dihydroxyacetone phosphate</name>
        <dbReference type="ChEBI" id="CHEBI:57642"/>
    </ligand>
</feature>
<feature type="binding site" evidence="1">
    <location>
        <position position="208"/>
    </location>
    <ligand>
        <name>Zn(2+)</name>
        <dbReference type="ChEBI" id="CHEBI:29105"/>
        <note>catalytic</note>
    </ligand>
</feature>
<feature type="binding site" evidence="1">
    <location>
        <begin position="209"/>
        <end position="211"/>
    </location>
    <ligand>
        <name>dihydroxyacetone phosphate</name>
        <dbReference type="ChEBI" id="CHEBI:57642"/>
    </ligand>
</feature>
<feature type="binding site" evidence="1">
    <location>
        <begin position="230"/>
        <end position="233"/>
    </location>
    <ligand>
        <name>dihydroxyacetone phosphate</name>
        <dbReference type="ChEBI" id="CHEBI:57642"/>
    </ligand>
</feature>
<comment type="function">
    <text evidence="1">Catalytic subunit of the tagatose-1,6-bisphosphate aldolase GatYZ, which catalyzes the reversible aldol condensation of dihydroxyacetone phosphate (DHAP or glycerone-phosphate) with glyceraldehyde 3-phosphate (G3P) to produce tagatose 1,6-bisphosphate (TBP). Requires GatZ subunit for full activity and stability. Is involved in the catabolism of galactitol.</text>
</comment>
<comment type="catalytic activity">
    <reaction evidence="1">
        <text>D-tagatofuranose 1,6-bisphosphate = D-glyceraldehyde 3-phosphate + dihydroxyacetone phosphate</text>
        <dbReference type="Rhea" id="RHEA:22948"/>
        <dbReference type="ChEBI" id="CHEBI:57642"/>
        <dbReference type="ChEBI" id="CHEBI:58694"/>
        <dbReference type="ChEBI" id="CHEBI:59776"/>
        <dbReference type="EC" id="4.1.2.40"/>
    </reaction>
</comment>
<comment type="cofactor">
    <cofactor evidence="1">
        <name>Zn(2+)</name>
        <dbReference type="ChEBI" id="CHEBI:29105"/>
    </cofactor>
    <text evidence="1">Binds 1 zinc ion per subunit.</text>
</comment>
<comment type="pathway">
    <text evidence="1">Carbohydrate metabolism; D-tagatose 6-phosphate degradation; D-glyceraldehyde 3-phosphate and glycerone phosphate from D-tagatose 6-phosphate: step 2/2.</text>
</comment>
<comment type="subunit">
    <text evidence="1">Forms a complex with GatZ.</text>
</comment>
<comment type="similarity">
    <text evidence="1">Belongs to the class II fructose-bisphosphate aldolase family. TagBP aldolase GatY subfamily.</text>
</comment>
<comment type="sequence caution" evidence="2">
    <conflict type="erroneous initiation">
        <sequence resource="EMBL-CDS" id="ABB65582"/>
    </conflict>
</comment>
<proteinExistence type="inferred from homology"/>
<reference key="1">
    <citation type="journal article" date="2005" name="Nucleic Acids Res.">
        <title>Genome dynamics and diversity of Shigella species, the etiologic agents of bacillary dysentery.</title>
        <authorList>
            <person name="Yang F."/>
            <person name="Yang J."/>
            <person name="Zhang X."/>
            <person name="Chen L."/>
            <person name="Jiang Y."/>
            <person name="Yan Y."/>
            <person name="Tang X."/>
            <person name="Wang J."/>
            <person name="Xiong Z."/>
            <person name="Dong J."/>
            <person name="Xue Y."/>
            <person name="Zhu Y."/>
            <person name="Xu X."/>
            <person name="Sun L."/>
            <person name="Chen S."/>
            <person name="Nie H."/>
            <person name="Peng J."/>
            <person name="Xu J."/>
            <person name="Wang Y."/>
            <person name="Yuan Z."/>
            <person name="Wen Y."/>
            <person name="Yao Z."/>
            <person name="Shen Y."/>
            <person name="Qiang B."/>
            <person name="Hou Y."/>
            <person name="Yu J."/>
            <person name="Jin Q."/>
        </authorList>
    </citation>
    <scope>NUCLEOTIDE SEQUENCE [LARGE SCALE GENOMIC DNA]</scope>
    <source>
        <strain>Sb227</strain>
    </source>
</reference>
<keyword id="KW-0298">Galactitol metabolism</keyword>
<keyword id="KW-0456">Lyase</keyword>
<keyword id="KW-0479">Metal-binding</keyword>
<keyword id="KW-0862">Zinc</keyword>